<name>AKA10_MOUSE</name>
<accession>O88845</accession>
<accession>Q5SUB5</accession>
<accession>Q5SUB7</accession>
<accession>Q7TPE7</accession>
<accession>Q8BQL6</accession>
<sequence>MRGAGPSPRHSPRALRPDPGPAMSFFRRKVKGKEQEKTLDVKSTKASVAVHSPQKSTKNHALLEAAGPSHVAINAISANMDSFSSSRTATLKKQPSHMEAAHFGDLGRSCLDYQTQETKSSLSKTLEQVLRDTVVLPYFLQFMELRRMEHLVKFWLEAESFHSTTWSRIRAHSLNTVKQSSLAEPVSPSKRHETPASSVTEALDRRLGDSSSAPLLVTQSEGTDLSSRTQNPQNHLLLSQEGHSARSLHREVARTGSHQIPTDSQDSSSRLAVGSRNSCSSPLRELSEKLMKSIEQDAVNTFTKYISPDAAKPIPITEAMRNDIIAKICGEDGQVDPNCFVLAQAVVFSAMEQEHFSEFLRSHHFCKYQIEVLTSGTVYLADILFCESALFYFSEYMEKEDAVNILQFWLAADNFQSQLAAKKGQYDGQEAQNDAMILYDKYFSLQATHPLGFDDVVRLEIESNICREGGPLPNCFTTPLRQAWTTMEKVFLPGFLSSNLYYKYLNDLIHSVRGDEFLGGNVSLAAHGSVCLPEESHSGGSDGSTAQSSVKKASIKILKNFDEAIIVDAASLDPESLYQRTYAGKMSFGRVSDLGQFIRESEPEPDVKKSKGFMFSQAMKKWVQGNTDEAQEELAWKIAKMIVSDVMQQAHHDQPLEKSTKL</sequence>
<protein>
    <recommendedName>
        <fullName>A-kinase anchor protein 10, mitochondrial</fullName>
        <shortName>AKAP-10</shortName>
    </recommendedName>
    <alternativeName>
        <fullName>Dual specificity A kinase-anchoring protein 2</fullName>
        <shortName>D-AKAP-2</shortName>
    </alternativeName>
    <alternativeName>
        <fullName>Protein kinase A-anchoring protein 10</fullName>
        <shortName>PRKA10</shortName>
    </alternativeName>
</protein>
<gene>
    <name type="primary">Akap10</name>
</gene>
<feature type="transit peptide" description="Mitochondrion" evidence="2">
    <location>
        <begin position="1"/>
        <end position="28"/>
    </location>
</feature>
<feature type="chain" id="PRO_0000030405" description="A-kinase anchor protein 10, mitochondrial">
    <location>
        <begin position="29"/>
        <end position="662"/>
    </location>
</feature>
<feature type="domain" description="RGS 1" evidence="3">
    <location>
        <begin position="125"/>
        <end position="369"/>
    </location>
</feature>
<feature type="domain" description="RGS 2" evidence="3">
    <location>
        <begin position="379"/>
        <end position="505"/>
    </location>
</feature>
<feature type="region of interest" description="Disordered" evidence="4">
    <location>
        <begin position="1"/>
        <end position="55"/>
    </location>
</feature>
<feature type="region of interest" description="Disordered" evidence="4">
    <location>
        <begin position="178"/>
        <end position="205"/>
    </location>
</feature>
<feature type="region of interest" description="Disordered" evidence="4">
    <location>
        <begin position="242"/>
        <end position="280"/>
    </location>
</feature>
<feature type="region of interest" description="PKA-RII subunit binding">
    <location>
        <begin position="634"/>
        <end position="647"/>
    </location>
</feature>
<feature type="compositionally biased region" description="Basic and acidic residues" evidence="4">
    <location>
        <begin position="32"/>
        <end position="43"/>
    </location>
</feature>
<feature type="compositionally biased region" description="Polar residues" evidence="4">
    <location>
        <begin position="256"/>
        <end position="280"/>
    </location>
</feature>
<feature type="modified residue" description="Phosphoserine" evidence="7">
    <location>
        <position position="52"/>
    </location>
</feature>
<feature type="modified residue" description="Phosphoserine" evidence="1">
    <location>
        <position position="189"/>
    </location>
</feature>
<feature type="modified residue" description="Phosphoserine" evidence="1">
    <location>
        <position position="281"/>
    </location>
</feature>
<feature type="splice variant" id="VSP_014873" description="In isoform 2." evidence="6">
    <location>
        <begin position="1"/>
        <end position="79"/>
    </location>
</feature>
<feature type="splice variant" id="VSP_014874" description="In isoform 3." evidence="6">
    <original>SSVKKASIKILKN</original>
    <variation>VLANVTLSMGWEA</variation>
    <location>
        <begin position="548"/>
        <end position="560"/>
    </location>
</feature>
<feature type="splice variant" id="VSP_014875" description="In isoform 3." evidence="6">
    <location>
        <begin position="561"/>
        <end position="662"/>
    </location>
</feature>
<feature type="splice variant" id="VSP_014876" description="In isoform 2." evidence="6">
    <location>
        <begin position="585"/>
        <end position="662"/>
    </location>
</feature>
<feature type="sequence conflict" description="In Ref. 4." evidence="6" ref="4">
    <original>V</original>
    <variation>S</variation>
    <location>
        <position position="177"/>
    </location>
</feature>
<feature type="sequence conflict" description="In Ref. 3." evidence="6" ref="3">
    <original>S</original>
    <variation>G</variation>
    <location>
        <position position="226"/>
    </location>
</feature>
<feature type="sequence conflict" description="In Ref. 3; AAC61898." evidence="6" ref="3">
    <original>AQ</original>
    <variation>DT</variation>
    <location>
        <begin position="343"/>
        <end position="344"/>
    </location>
</feature>
<feature type="sequence conflict" description="In Ref. 4; AAH54105." evidence="6" ref="4">
    <original>I</original>
    <variation>V</variation>
    <location>
        <position position="405"/>
    </location>
</feature>
<feature type="sequence conflict" description="In Ref. 4; AAH54105." evidence="6" ref="4">
    <original>Q</original>
    <variation>P</variation>
    <location>
        <position position="649"/>
    </location>
</feature>
<keyword id="KW-0025">Alternative splicing</keyword>
<keyword id="KW-0963">Cytoplasm</keyword>
<keyword id="KW-0472">Membrane</keyword>
<keyword id="KW-0496">Mitochondrion</keyword>
<keyword id="KW-0597">Phosphoprotein</keyword>
<keyword id="KW-1185">Reference proteome</keyword>
<keyword id="KW-0677">Repeat</keyword>
<keyword id="KW-0809">Transit peptide</keyword>
<proteinExistence type="evidence at protein level"/>
<organism>
    <name type="scientific">Mus musculus</name>
    <name type="common">Mouse</name>
    <dbReference type="NCBI Taxonomy" id="10090"/>
    <lineage>
        <taxon>Eukaryota</taxon>
        <taxon>Metazoa</taxon>
        <taxon>Chordata</taxon>
        <taxon>Craniata</taxon>
        <taxon>Vertebrata</taxon>
        <taxon>Euteleostomi</taxon>
        <taxon>Mammalia</taxon>
        <taxon>Eutheria</taxon>
        <taxon>Euarchontoglires</taxon>
        <taxon>Glires</taxon>
        <taxon>Rodentia</taxon>
        <taxon>Myomorpha</taxon>
        <taxon>Muroidea</taxon>
        <taxon>Muridae</taxon>
        <taxon>Murinae</taxon>
        <taxon>Mus</taxon>
        <taxon>Mus</taxon>
    </lineage>
</organism>
<comment type="function">
    <text>Differentially targeted protein that binds to type I and II regulatory subunits of protein kinase A and anchors them to the mitochondria or the plasma membrane. Although the physiological relevance between PKA and AKAPS with mitochondria is not fully understood, one idea is that BAD, a proapoptotic member, is phosphorylated and inactivated by mitochondria-anchored PKA. It cannot be excluded too that it may facilitate PKA as well as G protein signal transduction, by acting as an adapter for assembling multiprotein complexes. With its RGS domain, it could lead to the interaction to G-alpha proteins, providing a link between the signaling machinery and the downstream kinase.</text>
</comment>
<comment type="subcellular location">
    <subcellularLocation>
        <location evidence="5">Mitochondrion</location>
    </subcellularLocation>
    <subcellularLocation>
        <location evidence="5">Membrane</location>
    </subcellularLocation>
    <subcellularLocation>
        <location evidence="5">Cytoplasm</location>
    </subcellularLocation>
    <text>Predominantly mitochondrial but also membrane associated and cytoplasmic.</text>
</comment>
<comment type="alternative products">
    <event type="alternative splicing"/>
    <isoform>
        <id>O88845-1</id>
        <name>1</name>
        <sequence type="displayed"/>
    </isoform>
    <isoform>
        <id>O88845-2</id>
        <name>2</name>
        <sequence type="described" ref="VSP_014873 VSP_014876"/>
    </isoform>
    <isoform>
        <id>O88845-3</id>
        <name>3</name>
        <sequence type="described" ref="VSP_014874 VSP_014875"/>
    </isoform>
</comment>
<comment type="tissue specificity">
    <text>Highly expressed in testis, kidney and lung, followed by brain, skeletal muscle, liver, spleen and heart. Also expressed in brown adipose tissue and pancreas.</text>
</comment>
<comment type="domain">
    <text>RII-alpha binding site, predicted to form an amphipathic helix, could participate in protein-protein interactions with a complementary surface on the R-subunit dimer.</text>
</comment>
<comment type="sequence caution" evidence="6">
    <conflict type="frameshift">
        <sequence resource="EMBL-CDS" id="AAC61898"/>
    </conflict>
</comment>
<comment type="sequence caution" evidence="6">
    <conflict type="erroneous initiation">
        <sequence resource="EMBL-CDS" id="AAH54105"/>
    </conflict>
</comment>
<evidence type="ECO:0000250" key="1">
    <source>
        <dbReference type="UniProtKB" id="O43572"/>
    </source>
</evidence>
<evidence type="ECO:0000255" key="2"/>
<evidence type="ECO:0000255" key="3">
    <source>
        <dbReference type="PROSITE-ProRule" id="PRU00171"/>
    </source>
</evidence>
<evidence type="ECO:0000256" key="4">
    <source>
        <dbReference type="SAM" id="MobiDB-lite"/>
    </source>
</evidence>
<evidence type="ECO:0000269" key="5">
    <source>
    </source>
</evidence>
<evidence type="ECO:0000305" key="6"/>
<evidence type="ECO:0007744" key="7">
    <source>
    </source>
</evidence>
<dbReference type="EMBL" id="AK049399">
    <property type="protein sequence ID" value="BAC33735.1"/>
    <property type="molecule type" value="mRNA"/>
</dbReference>
<dbReference type="EMBL" id="AL646042">
    <property type="status" value="NOT_ANNOTATED_CDS"/>
    <property type="molecule type" value="Genomic_DNA"/>
</dbReference>
<dbReference type="EMBL" id="AF021833">
    <property type="protein sequence ID" value="AAC61898.1"/>
    <property type="status" value="ALT_FRAME"/>
    <property type="molecule type" value="mRNA"/>
</dbReference>
<dbReference type="EMBL" id="BC054105">
    <property type="protein sequence ID" value="AAH54105.1"/>
    <property type="status" value="ALT_INIT"/>
    <property type="molecule type" value="mRNA"/>
</dbReference>
<dbReference type="CCDS" id="CCDS24821.1">
    <molecule id="O88845-1"/>
</dbReference>
<dbReference type="RefSeq" id="NP_064305.2">
    <molecule id="O88845-1"/>
    <property type="nucleotide sequence ID" value="NM_019921.3"/>
</dbReference>
<dbReference type="SMR" id="O88845"/>
<dbReference type="BioGRID" id="208127">
    <property type="interactions" value="1"/>
</dbReference>
<dbReference type="FunCoup" id="O88845">
    <property type="interactions" value="4459"/>
</dbReference>
<dbReference type="IntAct" id="O88845">
    <property type="interactions" value="2"/>
</dbReference>
<dbReference type="STRING" id="10090.ENSMUSP00000099710"/>
<dbReference type="GlyGen" id="O88845">
    <property type="glycosylation" value="1 site, 1 O-linked glycan (1 site)"/>
</dbReference>
<dbReference type="iPTMnet" id="O88845"/>
<dbReference type="PhosphoSitePlus" id="O88845"/>
<dbReference type="jPOST" id="O88845"/>
<dbReference type="PaxDb" id="10090-ENSMUSP00000099710"/>
<dbReference type="PeptideAtlas" id="O88845"/>
<dbReference type="ProteomicsDB" id="285791">
    <molecule id="O88845-1"/>
</dbReference>
<dbReference type="ProteomicsDB" id="285792">
    <molecule id="O88845-2"/>
</dbReference>
<dbReference type="ProteomicsDB" id="285793">
    <molecule id="O88845-3"/>
</dbReference>
<dbReference type="Pumba" id="O88845"/>
<dbReference type="Antibodypedia" id="26069">
    <property type="antibodies" value="259 antibodies from 34 providers"/>
</dbReference>
<dbReference type="DNASU" id="56697"/>
<dbReference type="Ensembl" id="ENSMUST00000058173.12">
    <molecule id="O88845-2"/>
    <property type="protein sequence ID" value="ENSMUSP00000054418.6"/>
    <property type="gene ID" value="ENSMUSG00000047804.16"/>
</dbReference>
<dbReference type="Ensembl" id="ENSMUST00000102650.10">
    <molecule id="O88845-1"/>
    <property type="protein sequence ID" value="ENSMUSP00000099710.4"/>
    <property type="gene ID" value="ENSMUSG00000047804.16"/>
</dbReference>
<dbReference type="Ensembl" id="ENSMUST00000108710.2">
    <molecule id="O88845-3"/>
    <property type="protein sequence ID" value="ENSMUSP00000104350.2"/>
    <property type="gene ID" value="ENSMUSG00000047804.16"/>
</dbReference>
<dbReference type="GeneID" id="56697"/>
<dbReference type="KEGG" id="mmu:56697"/>
<dbReference type="UCSC" id="uc007jii.2">
    <molecule id="O88845-1"/>
    <property type="organism name" value="mouse"/>
</dbReference>
<dbReference type="UCSC" id="uc007jik.2">
    <molecule id="O88845-3"/>
    <property type="organism name" value="mouse"/>
</dbReference>
<dbReference type="AGR" id="MGI:1890218"/>
<dbReference type="CTD" id="11216"/>
<dbReference type="MGI" id="MGI:1890218">
    <property type="gene designation" value="Akap10"/>
</dbReference>
<dbReference type="VEuPathDB" id="HostDB:ENSMUSG00000047804"/>
<dbReference type="eggNOG" id="KOG3590">
    <property type="taxonomic scope" value="Eukaryota"/>
</dbReference>
<dbReference type="GeneTree" id="ENSGT00390000015077"/>
<dbReference type="HOGENOM" id="CLU_022662_0_0_1"/>
<dbReference type="InParanoid" id="O88845"/>
<dbReference type="OMA" id="EFHCKYQ"/>
<dbReference type="OrthoDB" id="5584247at2759"/>
<dbReference type="PhylomeDB" id="O88845"/>
<dbReference type="TreeFam" id="TF105409"/>
<dbReference type="Reactome" id="R-MMU-983231">
    <property type="pathway name" value="Factors involved in megakaryocyte development and platelet production"/>
</dbReference>
<dbReference type="BioGRID-ORCS" id="56697">
    <property type="hits" value="4 hits in 76 CRISPR screens"/>
</dbReference>
<dbReference type="ChiTaRS" id="Akap10">
    <property type="organism name" value="mouse"/>
</dbReference>
<dbReference type="PRO" id="PR:O88845"/>
<dbReference type="Proteomes" id="UP000000589">
    <property type="component" value="Chromosome 11"/>
</dbReference>
<dbReference type="RNAct" id="O88845">
    <property type="molecule type" value="protein"/>
</dbReference>
<dbReference type="Bgee" id="ENSMUSG00000047804">
    <property type="expression patterns" value="Expressed in spermatid and 240 other cell types or tissues"/>
</dbReference>
<dbReference type="GO" id="GO:0005829">
    <property type="term" value="C:cytosol"/>
    <property type="evidence" value="ECO:0007669"/>
    <property type="project" value="Ensembl"/>
</dbReference>
<dbReference type="GO" id="GO:0005739">
    <property type="term" value="C:mitochondrion"/>
    <property type="evidence" value="ECO:0000314"/>
    <property type="project" value="MGI"/>
</dbReference>
<dbReference type="GO" id="GO:0005886">
    <property type="term" value="C:plasma membrane"/>
    <property type="evidence" value="ECO:0007669"/>
    <property type="project" value="Ensembl"/>
</dbReference>
<dbReference type="GO" id="GO:0032991">
    <property type="term" value="C:protein-containing complex"/>
    <property type="evidence" value="ECO:0007669"/>
    <property type="project" value="Ensembl"/>
</dbReference>
<dbReference type="GO" id="GO:0051018">
    <property type="term" value="F:protein kinase A binding"/>
    <property type="evidence" value="ECO:0000250"/>
    <property type="project" value="MGI"/>
</dbReference>
<dbReference type="GO" id="GO:0008104">
    <property type="term" value="P:protein localization"/>
    <property type="evidence" value="ECO:0000314"/>
    <property type="project" value="MGI"/>
</dbReference>
<dbReference type="CDD" id="cd12804">
    <property type="entry name" value="AKAP10_AKB"/>
    <property type="match status" value="1"/>
</dbReference>
<dbReference type="CDD" id="cd08735">
    <property type="entry name" value="RGS_AKAP2_1"/>
    <property type="match status" value="1"/>
</dbReference>
<dbReference type="CDD" id="cd08721">
    <property type="entry name" value="RGS_AKAP2_2"/>
    <property type="match status" value="1"/>
</dbReference>
<dbReference type="FunFam" id="1.10.167.10:FF:000018">
    <property type="entry name" value="A-kinase anchor protein 10, mitochondrial"/>
    <property type="match status" value="1"/>
</dbReference>
<dbReference type="FunFam" id="1.10.167.10:FF:000022">
    <property type="entry name" value="A-kinase anchor protein 10, mitochondrial"/>
    <property type="match status" value="1"/>
</dbReference>
<dbReference type="FunFam" id="1.10.167.10:FF:000005">
    <property type="entry name" value="Putative A-kinase anchor protein 10 mitochondrial"/>
    <property type="match status" value="1"/>
</dbReference>
<dbReference type="Gene3D" id="1.10.167.10">
    <property type="entry name" value="Regulator of G-protein Signalling 4, domain 2"/>
    <property type="match status" value="2"/>
</dbReference>
<dbReference type="InterPro" id="IPR037719">
    <property type="entry name" value="AKAP10_AKB_dom"/>
</dbReference>
<dbReference type="InterPro" id="IPR052246">
    <property type="entry name" value="Cell_Polariz_PKAAnc"/>
</dbReference>
<dbReference type="InterPro" id="IPR016137">
    <property type="entry name" value="RGS"/>
</dbReference>
<dbReference type="InterPro" id="IPR036305">
    <property type="entry name" value="RGS_sf"/>
</dbReference>
<dbReference type="InterPro" id="IPR044926">
    <property type="entry name" value="RGS_subdomain_2"/>
</dbReference>
<dbReference type="PANTHER" id="PTHR13155:SF1">
    <property type="entry name" value="A-KINASE ANCHOR PROTEIN 10, MITOCHONDRIAL"/>
    <property type="match status" value="1"/>
</dbReference>
<dbReference type="PANTHER" id="PTHR13155">
    <property type="entry name" value="A-KINASE ANCHOR PROTEINS"/>
    <property type="match status" value="1"/>
</dbReference>
<dbReference type="Pfam" id="PF00615">
    <property type="entry name" value="RGS"/>
    <property type="match status" value="2"/>
</dbReference>
<dbReference type="SMART" id="SM00315">
    <property type="entry name" value="RGS"/>
    <property type="match status" value="2"/>
</dbReference>
<dbReference type="SUPFAM" id="SSF48097">
    <property type="entry name" value="Regulator of G-protein signaling, RGS"/>
    <property type="match status" value="2"/>
</dbReference>
<dbReference type="PROSITE" id="PS50132">
    <property type="entry name" value="RGS"/>
    <property type="match status" value="2"/>
</dbReference>
<reference key="1">
    <citation type="journal article" date="2005" name="Science">
        <title>The transcriptional landscape of the mammalian genome.</title>
        <authorList>
            <person name="Carninci P."/>
            <person name="Kasukawa T."/>
            <person name="Katayama S."/>
            <person name="Gough J."/>
            <person name="Frith M.C."/>
            <person name="Maeda N."/>
            <person name="Oyama R."/>
            <person name="Ravasi T."/>
            <person name="Lenhard B."/>
            <person name="Wells C."/>
            <person name="Kodzius R."/>
            <person name="Shimokawa K."/>
            <person name="Bajic V.B."/>
            <person name="Brenner S.E."/>
            <person name="Batalov S."/>
            <person name="Forrest A.R."/>
            <person name="Zavolan M."/>
            <person name="Davis M.J."/>
            <person name="Wilming L.G."/>
            <person name="Aidinis V."/>
            <person name="Allen J.E."/>
            <person name="Ambesi-Impiombato A."/>
            <person name="Apweiler R."/>
            <person name="Aturaliya R.N."/>
            <person name="Bailey T.L."/>
            <person name="Bansal M."/>
            <person name="Baxter L."/>
            <person name="Beisel K.W."/>
            <person name="Bersano T."/>
            <person name="Bono H."/>
            <person name="Chalk A.M."/>
            <person name="Chiu K.P."/>
            <person name="Choudhary V."/>
            <person name="Christoffels A."/>
            <person name="Clutterbuck D.R."/>
            <person name="Crowe M.L."/>
            <person name="Dalla E."/>
            <person name="Dalrymple B.P."/>
            <person name="de Bono B."/>
            <person name="Della Gatta G."/>
            <person name="di Bernardo D."/>
            <person name="Down T."/>
            <person name="Engstrom P."/>
            <person name="Fagiolini M."/>
            <person name="Faulkner G."/>
            <person name="Fletcher C.F."/>
            <person name="Fukushima T."/>
            <person name="Furuno M."/>
            <person name="Futaki S."/>
            <person name="Gariboldi M."/>
            <person name="Georgii-Hemming P."/>
            <person name="Gingeras T.R."/>
            <person name="Gojobori T."/>
            <person name="Green R.E."/>
            <person name="Gustincich S."/>
            <person name="Harbers M."/>
            <person name="Hayashi Y."/>
            <person name="Hensch T.K."/>
            <person name="Hirokawa N."/>
            <person name="Hill D."/>
            <person name="Huminiecki L."/>
            <person name="Iacono M."/>
            <person name="Ikeo K."/>
            <person name="Iwama A."/>
            <person name="Ishikawa T."/>
            <person name="Jakt M."/>
            <person name="Kanapin A."/>
            <person name="Katoh M."/>
            <person name="Kawasawa Y."/>
            <person name="Kelso J."/>
            <person name="Kitamura H."/>
            <person name="Kitano H."/>
            <person name="Kollias G."/>
            <person name="Krishnan S.P."/>
            <person name="Kruger A."/>
            <person name="Kummerfeld S.K."/>
            <person name="Kurochkin I.V."/>
            <person name="Lareau L.F."/>
            <person name="Lazarevic D."/>
            <person name="Lipovich L."/>
            <person name="Liu J."/>
            <person name="Liuni S."/>
            <person name="McWilliam S."/>
            <person name="Madan Babu M."/>
            <person name="Madera M."/>
            <person name="Marchionni L."/>
            <person name="Matsuda H."/>
            <person name="Matsuzawa S."/>
            <person name="Miki H."/>
            <person name="Mignone F."/>
            <person name="Miyake S."/>
            <person name="Morris K."/>
            <person name="Mottagui-Tabar S."/>
            <person name="Mulder N."/>
            <person name="Nakano N."/>
            <person name="Nakauchi H."/>
            <person name="Ng P."/>
            <person name="Nilsson R."/>
            <person name="Nishiguchi S."/>
            <person name="Nishikawa S."/>
            <person name="Nori F."/>
            <person name="Ohara O."/>
            <person name="Okazaki Y."/>
            <person name="Orlando V."/>
            <person name="Pang K.C."/>
            <person name="Pavan W.J."/>
            <person name="Pavesi G."/>
            <person name="Pesole G."/>
            <person name="Petrovsky N."/>
            <person name="Piazza S."/>
            <person name="Reed J."/>
            <person name="Reid J.F."/>
            <person name="Ring B.Z."/>
            <person name="Ringwald M."/>
            <person name="Rost B."/>
            <person name="Ruan Y."/>
            <person name="Salzberg S.L."/>
            <person name="Sandelin A."/>
            <person name="Schneider C."/>
            <person name="Schoenbach C."/>
            <person name="Sekiguchi K."/>
            <person name="Semple C.A."/>
            <person name="Seno S."/>
            <person name="Sessa L."/>
            <person name="Sheng Y."/>
            <person name="Shibata Y."/>
            <person name="Shimada H."/>
            <person name="Shimada K."/>
            <person name="Silva D."/>
            <person name="Sinclair B."/>
            <person name="Sperling S."/>
            <person name="Stupka E."/>
            <person name="Sugiura K."/>
            <person name="Sultana R."/>
            <person name="Takenaka Y."/>
            <person name="Taki K."/>
            <person name="Tammoja K."/>
            <person name="Tan S.L."/>
            <person name="Tang S."/>
            <person name="Taylor M.S."/>
            <person name="Tegner J."/>
            <person name="Teichmann S.A."/>
            <person name="Ueda H.R."/>
            <person name="van Nimwegen E."/>
            <person name="Verardo R."/>
            <person name="Wei C.L."/>
            <person name="Yagi K."/>
            <person name="Yamanishi H."/>
            <person name="Zabarovsky E."/>
            <person name="Zhu S."/>
            <person name="Zimmer A."/>
            <person name="Hide W."/>
            <person name="Bult C."/>
            <person name="Grimmond S.M."/>
            <person name="Teasdale R.D."/>
            <person name="Liu E.T."/>
            <person name="Brusic V."/>
            <person name="Quackenbush J."/>
            <person name="Wahlestedt C."/>
            <person name="Mattick J.S."/>
            <person name="Hume D.A."/>
            <person name="Kai C."/>
            <person name="Sasaki D."/>
            <person name="Tomaru Y."/>
            <person name="Fukuda S."/>
            <person name="Kanamori-Katayama M."/>
            <person name="Suzuki M."/>
            <person name="Aoki J."/>
            <person name="Arakawa T."/>
            <person name="Iida J."/>
            <person name="Imamura K."/>
            <person name="Itoh M."/>
            <person name="Kato T."/>
            <person name="Kawaji H."/>
            <person name="Kawagashira N."/>
            <person name="Kawashima T."/>
            <person name="Kojima M."/>
            <person name="Kondo S."/>
            <person name="Konno H."/>
            <person name="Nakano K."/>
            <person name="Ninomiya N."/>
            <person name="Nishio T."/>
            <person name="Okada M."/>
            <person name="Plessy C."/>
            <person name="Shibata K."/>
            <person name="Shiraki T."/>
            <person name="Suzuki S."/>
            <person name="Tagami M."/>
            <person name="Waki K."/>
            <person name="Watahiki A."/>
            <person name="Okamura-Oho Y."/>
            <person name="Suzuki H."/>
            <person name="Kawai J."/>
            <person name="Hayashizaki Y."/>
        </authorList>
    </citation>
    <scope>NUCLEOTIDE SEQUENCE [LARGE SCALE MRNA] (ISOFORM 1)</scope>
    <source>
        <strain>C57BL/6J</strain>
        <tissue>Embryo</tissue>
    </source>
</reference>
<reference key="2">
    <citation type="journal article" date="2009" name="PLoS Biol.">
        <title>Lineage-specific biology revealed by a finished genome assembly of the mouse.</title>
        <authorList>
            <person name="Church D.M."/>
            <person name="Goodstadt L."/>
            <person name="Hillier L.W."/>
            <person name="Zody M.C."/>
            <person name="Goldstein S."/>
            <person name="She X."/>
            <person name="Bult C.J."/>
            <person name="Agarwala R."/>
            <person name="Cherry J.L."/>
            <person name="DiCuccio M."/>
            <person name="Hlavina W."/>
            <person name="Kapustin Y."/>
            <person name="Meric P."/>
            <person name="Maglott D."/>
            <person name="Birtle Z."/>
            <person name="Marques A.C."/>
            <person name="Graves T."/>
            <person name="Zhou S."/>
            <person name="Teague B."/>
            <person name="Potamousis K."/>
            <person name="Churas C."/>
            <person name="Place M."/>
            <person name="Herschleb J."/>
            <person name="Runnheim R."/>
            <person name="Forrest D."/>
            <person name="Amos-Landgraf J."/>
            <person name="Schwartz D.C."/>
            <person name="Cheng Z."/>
            <person name="Lindblad-Toh K."/>
            <person name="Eichler E.E."/>
            <person name="Ponting C.P."/>
        </authorList>
    </citation>
    <scope>NUCLEOTIDE SEQUENCE [LARGE SCALE GENOMIC DNA]</scope>
    <source>
        <strain>C57BL/6J</strain>
    </source>
</reference>
<reference key="3">
    <citation type="journal article" date="1997" name="Proc. Natl. Acad. Sci. U.S.A.">
        <title>D-AKAP2, a novel protein kinase A anchoring protein with a putative RGS domain.</title>
        <authorList>
            <person name="Huang L.J.-S."/>
            <person name="Durick K."/>
            <person name="Weiner J.A."/>
            <person name="Chun J."/>
            <person name="Taylor S.S."/>
        </authorList>
    </citation>
    <scope>NUCLEOTIDE SEQUENCE [MRNA] OF 160-662 (ISOFORM 1)</scope>
    <source>
        <tissue>Testis</tissue>
    </source>
</reference>
<reference key="4">
    <citation type="journal article" date="2004" name="Genome Res.">
        <title>The status, quality, and expansion of the NIH full-length cDNA project: the Mammalian Gene Collection (MGC).</title>
        <authorList>
            <consortium name="The MGC Project Team"/>
        </authorList>
    </citation>
    <scope>NUCLEOTIDE SEQUENCE [LARGE SCALE MRNA] OF 177-662 (ISOFORM 1)</scope>
    <source>
        <strain>B5/EGFP</strain>
        <tissue>Trophoblast stem cell</tissue>
    </source>
</reference>
<reference key="5">
    <citation type="journal article" date="2001" name="Proc. Natl. Acad. Sci. U.S.A.">
        <title>Cloning and mitochondrial localization of full-length D-AKAP2, a protein kinase A anchoring protein.</title>
        <authorList>
            <person name="Wang L."/>
            <person name="Sunahara R.K."/>
            <person name="Krumins A."/>
            <person name="Perkins G."/>
            <person name="Crochiere M.L."/>
            <person name="Mackey M."/>
            <person name="Bell S."/>
            <person name="Ellisman M.H."/>
            <person name="Taylor S.S."/>
        </authorList>
    </citation>
    <scope>SUBCELLULAR LOCATION</scope>
</reference>
<reference key="6">
    <citation type="journal article" date="2009" name="Immunity">
        <title>The phagosomal proteome in interferon-gamma-activated macrophages.</title>
        <authorList>
            <person name="Trost M."/>
            <person name="English L."/>
            <person name="Lemieux S."/>
            <person name="Courcelles M."/>
            <person name="Desjardins M."/>
            <person name="Thibault P."/>
        </authorList>
    </citation>
    <scope>IDENTIFICATION BY MASS SPECTROMETRY [LARGE SCALE ANALYSIS]</scope>
</reference>
<reference key="7">
    <citation type="journal article" date="2010" name="Cell">
        <title>A tissue-specific atlas of mouse protein phosphorylation and expression.</title>
        <authorList>
            <person name="Huttlin E.L."/>
            <person name="Jedrychowski M.P."/>
            <person name="Elias J.E."/>
            <person name="Goswami T."/>
            <person name="Rad R."/>
            <person name="Beausoleil S.A."/>
            <person name="Villen J."/>
            <person name="Haas W."/>
            <person name="Sowa M.E."/>
            <person name="Gygi S.P."/>
        </authorList>
    </citation>
    <scope>PHOSPHORYLATION [LARGE SCALE ANALYSIS] AT SER-52</scope>
    <scope>IDENTIFICATION BY MASS SPECTROMETRY [LARGE SCALE ANALYSIS]</scope>
    <source>
        <tissue>Brain</tissue>
        <tissue>Lung</tissue>
        <tissue>Spleen</tissue>
        <tissue>Testis</tissue>
    </source>
</reference>